<feature type="initiator methionine" description="Removed" evidence="2">
    <location>
        <position position="1"/>
    </location>
</feature>
<feature type="chain" id="PRO_0000063668" description="Keratin, type I cytoskeletal 18">
    <location>
        <begin position="2"/>
        <end position="423"/>
    </location>
</feature>
<feature type="domain" description="IF rod" evidence="5">
    <location>
        <begin position="72"/>
        <end position="384"/>
    </location>
</feature>
<feature type="region of interest" description="Head" evidence="4">
    <location>
        <begin position="2"/>
        <end position="71"/>
    </location>
</feature>
<feature type="region of interest" description="Necessary for interaction with PNN" evidence="2">
    <location>
        <begin position="62"/>
        <end position="366"/>
    </location>
</feature>
<feature type="region of interest" description="Interaction with TRADD" evidence="2">
    <location>
        <begin position="69"/>
        <end position="121"/>
    </location>
</feature>
<feature type="region of interest" description="Coil 1A" evidence="4">
    <location>
        <begin position="72"/>
        <end position="107"/>
    </location>
</feature>
<feature type="region of interest" description="Linker 1" evidence="4">
    <location>
        <begin position="108"/>
        <end position="125"/>
    </location>
</feature>
<feature type="region of interest" description="Coil 1B" evidence="4">
    <location>
        <begin position="126"/>
        <end position="217"/>
    </location>
</feature>
<feature type="region of interest" description="Linker 12" evidence="4">
    <location>
        <begin position="218"/>
        <end position="241"/>
    </location>
</feature>
<feature type="region of interest" description="Interaction with DNAJB6" evidence="2">
    <location>
        <begin position="236"/>
        <end position="384"/>
    </location>
</feature>
<feature type="region of interest" description="Coil 2" evidence="4">
    <location>
        <begin position="242"/>
        <end position="380"/>
    </location>
</feature>
<feature type="region of interest" description="Tail" evidence="4">
    <location>
        <begin position="381"/>
        <end position="423"/>
    </location>
</feature>
<feature type="site" description="Cleavage; by caspase-3, caspase-6 or caspase-7" evidence="1">
    <location>
        <begin position="231"/>
        <end position="232"/>
    </location>
</feature>
<feature type="site" description="Stutter" evidence="4">
    <location>
        <position position="264"/>
    </location>
</feature>
<feature type="site" description="Stutter" evidence="4">
    <location>
        <position position="324"/>
    </location>
</feature>
<feature type="modified residue" description="N-acetylserine" evidence="2">
    <location>
        <position position="2"/>
    </location>
</feature>
<feature type="modified residue" description="Phosphoserine" evidence="2">
    <location>
        <position position="7"/>
    </location>
</feature>
<feature type="modified residue" description="Phosphoserine" evidence="2">
    <location>
        <position position="11"/>
    </location>
</feature>
<feature type="modified residue" description="Phosphoserine" evidence="2">
    <location>
        <position position="16"/>
    </location>
</feature>
<feature type="modified residue" description="Phosphoserine" evidence="23">
    <location>
        <position position="19"/>
    </location>
</feature>
<feature type="modified residue" description="Phosphoserine; alternate" evidence="24">
    <location>
        <position position="31"/>
    </location>
</feature>
<feature type="modified residue" description="Phosphoserine; alternate" evidence="3">
    <location>
        <position position="32"/>
    </location>
</feature>
<feature type="modified residue" description="Phosphoserine" evidence="23 24">
    <location>
        <position position="35"/>
    </location>
</feature>
<feature type="modified residue" description="Phosphotyrosine" evidence="3">
    <location>
        <position position="37"/>
    </location>
</feature>
<feature type="modified residue" description="Phosphoserine" evidence="2">
    <location>
        <position position="43"/>
    </location>
</feature>
<feature type="modified residue" description="Omega-N-methylarginine" evidence="2">
    <location>
        <position position="46"/>
    </location>
</feature>
<feature type="modified residue" description="Phosphoserine; alternate" evidence="2">
    <location>
        <position position="50"/>
    </location>
</feature>
<feature type="modified residue" description="Phosphoserine; by MAPKAPK2 and MAPKAPK3" evidence="3">
    <location>
        <position position="52"/>
    </location>
</feature>
<feature type="modified residue" description="Phosphoserine" evidence="24">
    <location>
        <position position="57"/>
    </location>
</feature>
<feature type="modified residue" description="Phosphoserine" evidence="2">
    <location>
        <position position="60"/>
    </location>
</feature>
<feature type="modified residue" description="Phosphoserine" evidence="2">
    <location>
        <position position="85"/>
    </location>
</feature>
<feature type="modified residue" description="N6-acetyllysine" evidence="2">
    <location>
        <position position="124"/>
    </location>
</feature>
<feature type="modified residue" description="Phosphoserine" evidence="3">
    <location>
        <position position="137"/>
    </location>
</feature>
<feature type="modified residue" description="Phosphoserine" evidence="2">
    <location>
        <position position="170"/>
    </location>
</feature>
<feature type="modified residue" description="Phosphothreonine" evidence="2">
    <location>
        <position position="295"/>
    </location>
</feature>
<feature type="modified residue" description="Phosphoserine" evidence="3">
    <location>
        <position position="384"/>
    </location>
</feature>
<feature type="modified residue" description="Phosphoserine" evidence="2">
    <location>
        <position position="391"/>
    </location>
</feature>
<feature type="modified residue" description="Phosphoserine" evidence="2">
    <location>
        <position position="392"/>
    </location>
</feature>
<feature type="modified residue" description="Phosphoserine" evidence="2">
    <location>
        <position position="394"/>
    </location>
</feature>
<feature type="modified residue" description="Phosphothreonine" evidence="2">
    <location>
        <position position="397"/>
    </location>
</feature>
<feature type="glycosylation site" description="O-linked (GlcNAc) serine; alternate" evidence="1">
    <location>
        <position position="31"/>
    </location>
</feature>
<feature type="glycosylation site" description="O-linked (GlcNAc) serine; alternate" evidence="1">
    <location>
        <position position="32"/>
    </location>
</feature>
<feature type="glycosylation site" description="O-linked (GlcNAc) serine; alternate" evidence="2">
    <location>
        <position position="50"/>
    </location>
</feature>
<feature type="cross-link" description="Glycyl lysine isopeptide (Lys-Gly) (interchain with G-Cter in SUMO2)" evidence="2">
    <location>
        <position position="73"/>
    </location>
</feature>
<feature type="cross-link" description="Glycyl lysine isopeptide (Lys-Gly) (interchain with G-Cter in SUMO2)" evidence="2">
    <location>
        <position position="240"/>
    </location>
</feature>
<feature type="cross-link" description="Glycyl lysine isopeptide (Lys-Gly) (interchain with G-Cter in SUMO2)" evidence="2">
    <location>
        <position position="363"/>
    </location>
</feature>
<feature type="cross-link" description="Glycyl lysine isopeptide (Lys-Gly) (interchain with G-Cter in SUMO2)" evidence="2">
    <location>
        <position position="365"/>
    </location>
</feature>
<feature type="cross-link" description="Glycyl lysine isopeptide (Lys-Gly) (interchain with G-Cter in SUMO2)" evidence="2">
    <location>
        <position position="410"/>
    </location>
</feature>
<feature type="sequence conflict" description="In Ref. 2; CAA57204." evidence="19" ref="2">
    <original>T</original>
    <variation>I</variation>
    <location>
        <position position="125"/>
    </location>
</feature>
<reference evidence="19 20" key="1">
    <citation type="journal article" date="2004" name="Genome Res.">
        <title>The status, quality, and expansion of the NIH full-length cDNA project: the Mammalian Gene Collection (MGC).</title>
        <authorList>
            <consortium name="The MGC Project Team"/>
        </authorList>
    </citation>
    <scope>NUCLEOTIDE SEQUENCE [LARGE SCALE MRNA]</scope>
    <source>
        <tissue evidence="20">Thymus</tissue>
    </source>
</reference>
<reference evidence="19 21" key="2">
    <citation type="journal article" date="1995" name="Mech. Dev.">
        <title>Switch in the expression of the K19/K18 keratin genes as a very early evidence of testicular differentiation in the rat.</title>
        <authorList>
            <person name="Fridmacher V."/>
            <person name="le Bert M."/>
            <person name="Guillou F."/>
            <person name="Magre S."/>
        </authorList>
    </citation>
    <scope>NUCLEOTIDE SEQUENCE [MRNA] OF 124-270</scope>
    <scope>DEVELOPMENTAL STAGE</scope>
    <source>
        <strain evidence="21">Wistar</strain>
        <tissue evidence="15">Fetal gonad</tissue>
    </source>
</reference>
<reference evidence="19" key="3">
    <citation type="journal article" date="2005" name="FEBS J.">
        <title>Proteome analysis of a rat liver nuclear insoluble protein fraction and localization of a novel protein, ISP36, to compartments in the interchromatin space.</title>
        <authorList>
            <person name="Segawa M."/>
            <person name="Niino K."/>
            <person name="Mineki R."/>
            <person name="Kaga N."/>
            <person name="Murayama K."/>
            <person name="Sugimoto K."/>
            <person name="Watanabe Y."/>
            <person name="Furukawa K."/>
            <person name="Horigome T."/>
        </authorList>
    </citation>
    <scope>PROTEIN SEQUENCE OF 131-140</scope>
    <scope>SUBCELLULAR LOCATION</scope>
    <source>
        <tissue evidence="9">Liver</tissue>
    </source>
</reference>
<reference evidence="19" key="4">
    <citation type="journal article" date="1993" name="Differentiation">
        <title>Intermediate filament proteins and epithelial differentiation in the embryonic ovary of the rat.</title>
        <authorList>
            <person name="Frojdman K."/>
            <person name="Paranko J."/>
            <person name="Virtanen I."/>
            <person name="Pelliniemi L.J."/>
        </authorList>
    </citation>
    <scope>DEVELOPMENTAL STAGE</scope>
</reference>
<reference evidence="19" key="5">
    <citation type="journal article" date="1994" name="Epithelial Cell Biol.">
        <title>Cytokeratin expression in epithelial cells isolated from the crypt and villus regions of the rodent small intestine.</title>
        <authorList>
            <person name="Flint N."/>
            <person name="Pemberton P.W."/>
            <person name="Lobley R.W."/>
            <person name="Evans G.S."/>
        </authorList>
    </citation>
    <scope>TISSUE SPECIFICITY</scope>
    <scope>DEVELOPMENTAL STAGE</scope>
</reference>
<reference evidence="19" key="6">
    <citation type="journal article" date="1994" name="Histochemistry">
        <title>Colocalization of cytokeratin 18 and villin in type III alveolar cells (brush cells) of the rat lung.</title>
        <authorList>
            <person name="Kasper M."/>
            <person name="Hofer D."/>
            <person name="Woodcock-Mitchell J."/>
            <person name="Migheli A."/>
            <person name="Attanasio A."/>
            <person name="Rudolf T."/>
            <person name="Muller M."/>
            <person name="Drenckhahn D."/>
        </authorList>
    </citation>
    <scope>TISSUE SPECIFICITY</scope>
</reference>
<reference evidence="19" key="7">
    <citation type="journal article" date="1995" name="Differentiation">
        <title>Keratin 18 is associated with a subset of older taste cells in the rat.</title>
        <authorList>
            <person name="Zhang C."/>
            <person name="Cotter M."/>
            <person name="Lawton A."/>
            <person name="Oakley B."/>
            <person name="Wong L."/>
            <person name="Zeng Q."/>
        </authorList>
    </citation>
    <scope>DEVELOPMENTAL STAGE</scope>
</reference>
<reference evidence="19" key="8">
    <citation type="journal article" date="1995" name="Histochem. J.">
        <title>Glycoconjugates and keratin 18 define subsets of taste cells.</title>
        <authorList>
            <person name="Zeng Q."/>
            <person name="Lawton A."/>
            <person name="Oakley B."/>
        </authorList>
    </citation>
    <scope>TISSUE SPECIFICITY</scope>
    <scope>DEVELOPMENTAL STAGE</scope>
</reference>
<reference evidence="19" key="9">
    <citation type="journal article" date="1996" name="Cell Motil. Cytoskeleton">
        <title>Site-specificity of ethanol-induced dephosphorylation of rat hepatocyte keratins 8 and 18: a 31P NMR study.</title>
        <authorList>
            <person name="Eckert B.S."/>
            <person name="Yeagle P.L."/>
        </authorList>
    </citation>
    <scope>DEPHOSPHORYLATION BY ETHANOL</scope>
</reference>
<reference evidence="19" key="10">
    <citation type="journal article" date="1997" name="J. Biol. Chem.">
        <title>Cytokeratin 18 is expressed on the hepatocyte plasma membrane surface and interacts with thrombin-antithrombin complexes.</title>
        <authorList>
            <person name="Wells M.J."/>
            <person name="Hatton M.W."/>
            <person name="Hewlett B."/>
            <person name="Podor T.J."/>
            <person name="Sheffield W.P."/>
            <person name="Blajchman M.A."/>
        </authorList>
    </citation>
    <scope>FUNCTION</scope>
    <scope>TISSUE SPECIFICITY</scope>
    <scope>INTERACTION WITH THROMBIN-ANTITHROMBIN COMPLEX</scope>
</reference>
<reference evidence="19" key="11">
    <citation type="journal article" date="2000" name="J. Hepatol.">
        <title>Fibronectin regulates morphology, cell organization and gene expression of rat fetal hepatocytes in primary culture.</title>
        <authorList>
            <person name="Sanchez A."/>
            <person name="Alvarez A.M."/>
            <person name="Pagan R."/>
            <person name="Roncero C."/>
            <person name="Vilaro S."/>
            <person name="Benito M."/>
            <person name="Fabregat I."/>
        </authorList>
    </citation>
    <scope>TISSUE SPECIFICITY</scope>
    <scope>INDUCTION</scope>
</reference>
<reference evidence="19" key="12">
    <citation type="journal article" date="2000" name="J. Neurocytol.">
        <title>Identification of cytoskeletal markers for the different microvilli and cell types of the rat vomeronasal sensory epithelium.</title>
        <authorList>
            <person name="Hofer D."/>
            <person name="Shin D.W."/>
            <person name="Drenckhahn D."/>
        </authorList>
    </citation>
    <scope>SUBCELLULAR LOCATION</scope>
    <scope>TISSUE SPECIFICITY</scope>
</reference>
<reference evidence="19" key="13">
    <citation type="journal article" date="2004" name="Toxicol. in Vitro">
        <title>Foetal rat lung epithelial (FRLE) cells: partial characterisation and response to pneumotoxins.</title>
        <authorList>
            <person name="Ridd K."/>
            <person name="Alexander D.J."/>
            <person name="Reed C.J."/>
        </authorList>
    </citation>
    <scope>TISSUE SPECIFICITY</scope>
    <scope>DEVELOPMENTAL STAGE</scope>
</reference>
<reference evidence="19" key="14">
    <citation type="journal article" date="2006" name="Odontology">
        <title>Expression of keratin 18 in the periderm cells of the lingual epithelium of fetal rats: visualization by fluorescence immunohistochemistry and differential interference contrast microscopy.</title>
        <authorList>
            <person name="Iwasaki S."/>
            <person name="Aoyagi H."/>
            <person name="Asami T."/>
        </authorList>
    </citation>
    <scope>SUBCELLULAR LOCATION</scope>
    <scope>DEVELOPMENTAL STAGE</scope>
</reference>
<reference key="15">
    <citation type="journal article" date="2006" name="Proc. Natl. Acad. Sci. U.S.A.">
        <title>Quantitative phosphoproteomics of vasopressin-sensitive renal cells: regulation of aquaporin-2 phosphorylation at two sites.</title>
        <authorList>
            <person name="Hoffert J.D."/>
            <person name="Pisitkun T."/>
            <person name="Wang G."/>
            <person name="Shen R.-F."/>
            <person name="Knepper M.A."/>
        </authorList>
    </citation>
    <scope>PHOSPHORYLATION [LARGE SCALE ANALYSIS] AT SER-19 AND SER-35</scope>
    <scope>IDENTIFICATION BY MASS SPECTROMETRY [LARGE SCALE ANALYSIS]</scope>
</reference>
<reference key="16">
    <citation type="journal article" date="2012" name="Nat. Commun.">
        <title>Quantitative maps of protein phosphorylation sites across 14 different rat organs and tissues.</title>
        <authorList>
            <person name="Lundby A."/>
            <person name="Secher A."/>
            <person name="Lage K."/>
            <person name="Nordsborg N.B."/>
            <person name="Dmytriyev A."/>
            <person name="Lundby C."/>
            <person name="Olsen J.V."/>
        </authorList>
    </citation>
    <scope>PHOSPHORYLATION [LARGE SCALE ANALYSIS] AT SER-31; SER-35 AND SER-57</scope>
    <scope>IDENTIFICATION BY MASS SPECTROMETRY [LARGE SCALE ANALYSIS]</scope>
</reference>
<dbReference type="EMBL" id="BC091275">
    <property type="protein sequence ID" value="AAH91275.1"/>
    <property type="molecule type" value="mRNA"/>
</dbReference>
<dbReference type="EMBL" id="X81448">
    <property type="protein sequence ID" value="CAA57204.1"/>
    <property type="molecule type" value="mRNA"/>
</dbReference>
<dbReference type="RefSeq" id="NP_446428.1">
    <property type="nucleotide sequence ID" value="NM_053976.1"/>
</dbReference>
<dbReference type="SMR" id="Q5BJY9"/>
<dbReference type="BioGRID" id="254814">
    <property type="interactions" value="2"/>
</dbReference>
<dbReference type="FunCoup" id="Q5BJY9">
    <property type="interactions" value="379"/>
</dbReference>
<dbReference type="IntAct" id="Q5BJY9">
    <property type="interactions" value="2"/>
</dbReference>
<dbReference type="STRING" id="10116.ENSRNOP00000067234"/>
<dbReference type="GlyCosmos" id="Q5BJY9">
    <property type="glycosylation" value="3 sites, No reported glycans"/>
</dbReference>
<dbReference type="GlyGen" id="Q5BJY9">
    <property type="glycosylation" value="3 sites"/>
</dbReference>
<dbReference type="iPTMnet" id="Q5BJY9"/>
<dbReference type="PhosphoSitePlus" id="Q5BJY9"/>
<dbReference type="jPOST" id="Q5BJY9"/>
<dbReference type="PaxDb" id="10116-ENSRNOP00000067234"/>
<dbReference type="Ensembl" id="ENSRNOT00000073951.3">
    <property type="protein sequence ID" value="ENSRNOP00000067234.1"/>
    <property type="gene ID" value="ENSRNOG00000047393.3"/>
</dbReference>
<dbReference type="GeneID" id="294853"/>
<dbReference type="KEGG" id="rno:294853"/>
<dbReference type="AGR" id="RGD:619935"/>
<dbReference type="CTD" id="3875"/>
<dbReference type="RGD" id="619935">
    <property type="gene designation" value="Krt18"/>
</dbReference>
<dbReference type="eggNOG" id="ENOG502QUS8">
    <property type="taxonomic scope" value="Eukaryota"/>
</dbReference>
<dbReference type="GeneTree" id="ENSGT00940000153309"/>
<dbReference type="HOGENOM" id="CLU_012560_8_1_1"/>
<dbReference type="InParanoid" id="Q5BJY9"/>
<dbReference type="OMA" id="IHSTKIV"/>
<dbReference type="OrthoDB" id="2441647at2759"/>
<dbReference type="PhylomeDB" id="Q5BJY9"/>
<dbReference type="Reactome" id="R-RNO-6805567">
    <property type="pathway name" value="Keratinization"/>
</dbReference>
<dbReference type="Reactome" id="R-RNO-6809371">
    <property type="pathway name" value="Formation of the cornified envelope"/>
</dbReference>
<dbReference type="PRO" id="PR:Q5BJY9"/>
<dbReference type="Proteomes" id="UP000002494">
    <property type="component" value="Chromosome 7"/>
</dbReference>
<dbReference type="Bgee" id="ENSRNOG00000047393">
    <property type="expression patterns" value="Expressed in stomach and 17 other cell types or tissues"/>
</dbReference>
<dbReference type="GO" id="GO:0071944">
    <property type="term" value="C:cell periphery"/>
    <property type="evidence" value="ECO:0000266"/>
    <property type="project" value="RGD"/>
</dbReference>
<dbReference type="GO" id="GO:0034451">
    <property type="term" value="C:centriolar satellite"/>
    <property type="evidence" value="ECO:0000266"/>
    <property type="project" value="RGD"/>
</dbReference>
<dbReference type="GO" id="GO:0005737">
    <property type="term" value="C:cytoplasm"/>
    <property type="evidence" value="ECO:0000266"/>
    <property type="project" value="RGD"/>
</dbReference>
<dbReference type="GO" id="GO:0005856">
    <property type="term" value="C:cytoskeleton"/>
    <property type="evidence" value="ECO:0000318"/>
    <property type="project" value="GO_Central"/>
</dbReference>
<dbReference type="GO" id="GO:0009897">
    <property type="term" value="C:external side of plasma membrane"/>
    <property type="evidence" value="ECO:0000314"/>
    <property type="project" value="RGD"/>
</dbReference>
<dbReference type="GO" id="GO:0005615">
    <property type="term" value="C:extracellular space"/>
    <property type="evidence" value="ECO:0000314"/>
    <property type="project" value="RGD"/>
</dbReference>
<dbReference type="GO" id="GO:0005882">
    <property type="term" value="C:intermediate filament"/>
    <property type="evidence" value="ECO:0000266"/>
    <property type="project" value="RGD"/>
</dbReference>
<dbReference type="GO" id="GO:0045095">
    <property type="term" value="C:keratin filament"/>
    <property type="evidence" value="ECO:0000314"/>
    <property type="project" value="RGD"/>
</dbReference>
<dbReference type="GO" id="GO:0005815">
    <property type="term" value="C:microtubule organizing center"/>
    <property type="evidence" value="ECO:0000266"/>
    <property type="project" value="RGD"/>
</dbReference>
<dbReference type="GO" id="GO:0016363">
    <property type="term" value="C:nuclear matrix"/>
    <property type="evidence" value="ECO:0007669"/>
    <property type="project" value="UniProtKB-SubCell"/>
</dbReference>
<dbReference type="GO" id="GO:0005730">
    <property type="term" value="C:nucleolus"/>
    <property type="evidence" value="ECO:0007669"/>
    <property type="project" value="UniProtKB-SubCell"/>
</dbReference>
<dbReference type="GO" id="GO:0048471">
    <property type="term" value="C:perinuclear region of cytoplasm"/>
    <property type="evidence" value="ECO:0007669"/>
    <property type="project" value="UniProtKB-SubCell"/>
</dbReference>
<dbReference type="GO" id="GO:0032991">
    <property type="term" value="C:protein-containing complex"/>
    <property type="evidence" value="ECO:0000314"/>
    <property type="project" value="RGD"/>
</dbReference>
<dbReference type="GO" id="GO:0097110">
    <property type="term" value="F:scaffold protein binding"/>
    <property type="evidence" value="ECO:0000266"/>
    <property type="project" value="RGD"/>
</dbReference>
<dbReference type="GO" id="GO:0005198">
    <property type="term" value="F:structural molecule activity"/>
    <property type="evidence" value="ECO:0007669"/>
    <property type="project" value="InterPro"/>
</dbReference>
<dbReference type="GO" id="GO:1902488">
    <property type="term" value="P:cholangiocyte apoptotic process"/>
    <property type="evidence" value="ECO:0000270"/>
    <property type="project" value="RGD"/>
</dbReference>
<dbReference type="GO" id="GO:0097191">
    <property type="term" value="P:extrinsic apoptotic signaling pathway"/>
    <property type="evidence" value="ECO:0000266"/>
    <property type="project" value="RGD"/>
</dbReference>
<dbReference type="GO" id="GO:0043001">
    <property type="term" value="P:Golgi to plasma membrane protein transport"/>
    <property type="evidence" value="ECO:0000266"/>
    <property type="project" value="RGD"/>
</dbReference>
<dbReference type="GO" id="GO:0097284">
    <property type="term" value="P:hepatocyte apoptotic process"/>
    <property type="evidence" value="ECO:0000266"/>
    <property type="project" value="RGD"/>
</dbReference>
<dbReference type="GO" id="GO:0070365">
    <property type="term" value="P:hepatocyte differentiation"/>
    <property type="evidence" value="ECO:0000270"/>
    <property type="project" value="RGD"/>
</dbReference>
<dbReference type="GO" id="GO:0045104">
    <property type="term" value="P:intermediate filament cytoskeleton organization"/>
    <property type="evidence" value="ECO:0000266"/>
    <property type="project" value="RGD"/>
</dbReference>
<dbReference type="GO" id="GO:0072497">
    <property type="term" value="P:mesenchymal stem cell differentiation"/>
    <property type="evidence" value="ECO:0000270"/>
    <property type="project" value="RGD"/>
</dbReference>
<dbReference type="GO" id="GO:0043066">
    <property type="term" value="P:negative regulation of apoptotic process"/>
    <property type="evidence" value="ECO:0000266"/>
    <property type="project" value="RGD"/>
</dbReference>
<dbReference type="GO" id="GO:0009750">
    <property type="term" value="P:response to fructose"/>
    <property type="evidence" value="ECO:0000270"/>
    <property type="project" value="RGD"/>
</dbReference>
<dbReference type="GO" id="GO:0031667">
    <property type="term" value="P:response to nutrient levels"/>
    <property type="evidence" value="ECO:0000270"/>
    <property type="project" value="RGD"/>
</dbReference>
<dbReference type="GO" id="GO:0033209">
    <property type="term" value="P:tumor necrosis factor-mediated signaling pathway"/>
    <property type="evidence" value="ECO:0000266"/>
    <property type="project" value="RGD"/>
</dbReference>
<dbReference type="FunFam" id="1.20.5.1160:FF:000002">
    <property type="entry name" value="Type I keratin 10"/>
    <property type="match status" value="1"/>
</dbReference>
<dbReference type="FunFam" id="1.20.5.170:FF:000002">
    <property type="entry name" value="Type I keratin KA11"/>
    <property type="match status" value="1"/>
</dbReference>
<dbReference type="FunFam" id="1.20.5.500:FF:000001">
    <property type="entry name" value="Type II keratin 23"/>
    <property type="match status" value="1"/>
</dbReference>
<dbReference type="Gene3D" id="1.20.5.170">
    <property type="match status" value="1"/>
</dbReference>
<dbReference type="Gene3D" id="1.20.5.500">
    <property type="entry name" value="Single helix bin"/>
    <property type="match status" value="1"/>
</dbReference>
<dbReference type="Gene3D" id="1.20.5.1160">
    <property type="entry name" value="Vasodilator-stimulated phosphoprotein"/>
    <property type="match status" value="1"/>
</dbReference>
<dbReference type="InterPro" id="IPR018039">
    <property type="entry name" value="IF_conserved"/>
</dbReference>
<dbReference type="InterPro" id="IPR039008">
    <property type="entry name" value="IF_rod_dom"/>
</dbReference>
<dbReference type="InterPro" id="IPR002957">
    <property type="entry name" value="Keratin_I"/>
</dbReference>
<dbReference type="PANTHER" id="PTHR23239">
    <property type="entry name" value="INTERMEDIATE FILAMENT"/>
    <property type="match status" value="1"/>
</dbReference>
<dbReference type="PANTHER" id="PTHR23239:SF349">
    <property type="entry name" value="KERATIN, TYPE I CYTOSKELETAL 18"/>
    <property type="match status" value="1"/>
</dbReference>
<dbReference type="Pfam" id="PF00038">
    <property type="entry name" value="Filament"/>
    <property type="match status" value="1"/>
</dbReference>
<dbReference type="PRINTS" id="PR01248">
    <property type="entry name" value="TYPE1KERATIN"/>
</dbReference>
<dbReference type="SMART" id="SM01391">
    <property type="entry name" value="Filament"/>
    <property type="match status" value="1"/>
</dbReference>
<dbReference type="SUPFAM" id="SSF64593">
    <property type="entry name" value="Intermediate filament protein, coiled coil region"/>
    <property type="match status" value="2"/>
</dbReference>
<dbReference type="PROSITE" id="PS00226">
    <property type="entry name" value="IF_ROD_1"/>
    <property type="match status" value="1"/>
</dbReference>
<dbReference type="PROSITE" id="PS51842">
    <property type="entry name" value="IF_ROD_2"/>
    <property type="match status" value="1"/>
</dbReference>
<accession>Q5BJY9</accession>
<accession>Q63278</accession>
<comment type="function">
    <text evidence="2 18">When phosphorylated, plays a role in filament reorganization. Involved in the delivery of mutated CFTR to the plasma membrane. Together with KRT8, is involved in interleukin-6 (IL-6)-mediated barrier protection (By similarity). Involved in the uptake of thrombin-antithrombin complexes by hepatic cells.</text>
</comment>
<comment type="subunit">
    <text evidence="1 2 3 18">Heterotetramer of two type I and two type II keratins. KRT18 associates with KRT8 (By similarity). Interacts with PNN and mutated CFTR. Interacts with YWHAE, YWHAH and YWHAZ only when phosphorylated. Interacts with DNAJB6, TCHP and TRADD (By similarity). Interacts with the thrombin-antithrombin complex. Interacts with FAM83H (By similarity). Interacts with EPPK1 (By similarity). Interacts with PKP1 and PKP2 (By similarity).</text>
</comment>
<comment type="subcellular location">
    <subcellularLocation>
        <location evidence="9 10">Nucleus matrix</location>
    </subcellularLocation>
    <subcellularLocation>
        <location evidence="2">Cytoplasm</location>
        <location evidence="2">Perinuclear region</location>
    </subcellularLocation>
    <subcellularLocation>
        <location evidence="2">Nucleus</location>
        <location evidence="2">Nucleolus</location>
    </subcellularLocation>
    <subcellularLocation>
        <location evidence="9 10">Cytoplasm</location>
    </subcellularLocation>
</comment>
<comment type="tissue specificity">
    <text evidence="6 7 8 12 13 16 18">Expressed on the plasma membrane of hepatocytes and in the narrow apical portions of supporting cells in the vomeronasal sensory epithelium. Detected in the type III alveolar cells of the lung, in the proliferative crypt epithelium of the small intestine and in the older intragemmal cells of the tongue.</text>
</comment>
<comment type="developmental stage">
    <text evidence="8 10 11 12 14 15 16">Expression first detected in the male gonad at 13.5 dpc, at the onset of testicular differentiation, and at 17 dpc in cell aggregates of the early ovary; then only in some cord cells of the older ovary. Expressed in fetal lung epithelium at 20 dpc. Detected at 13 dpc, sparsely distributed throughout the cytoplasm in the single layer of periderm cells covering the dorsal epithelium of the fetal tongue. Expression increases in the lingual periderm cells at 17 dpc and then disappears at 19 dpc coinciding with the disappearance of the periderm cells at the onset of squamous stratification of the lingual epithelium. Expressed at day 2-3 postnatally in older, elongated taste bud cells and at day 5, uniformly distributed throughout the epithelium of villi, intervillus epithelium and developing crypt buds of the small intestine.</text>
</comment>
<comment type="induction">
    <text evidence="2 6">By IL-6 (By similarity). By fibronectin.</text>
</comment>
<comment type="PTM">
    <text evidence="2">Phosphorylation increases by IL-6.</text>
</comment>
<comment type="PTM">
    <text evidence="1">Proteolytically cleaved by caspases during epithelial cell apoptosis. Cleavage occurs at Asp-231 by either caspase-3, caspase-6 or caspase-7 (By similarity).</text>
</comment>
<comment type="PTM">
    <text evidence="17">Dephosphorylated by ethanol.</text>
</comment>
<comment type="PTM">
    <text evidence="1">O-GlcNAcylation increases solubility, and decreases stability by inducing proteasomal degradation.</text>
</comment>
<comment type="miscellaneous">
    <text>There are two types of cytoskeletal and microfibrillar keratin: I (acidic; 40-55 kDa) and II (neutral to basic; 56-70 kDa).</text>
</comment>
<comment type="similarity">
    <text evidence="5">Belongs to the intermediate filament family.</text>
</comment>
<protein>
    <recommendedName>
        <fullName>Keratin, type I cytoskeletal 18</fullName>
    </recommendedName>
    <alternativeName>
        <fullName>Cytokeratin-18</fullName>
        <shortName>CK-18</shortName>
    </alternativeName>
    <alternativeName>
        <fullName>Keratin-18</fullName>
        <shortName>K18</shortName>
    </alternativeName>
</protein>
<gene>
    <name evidence="2" type="primary">Krt18</name>
    <name evidence="22" type="synonym">Krt1-18</name>
</gene>
<sequence>MSFTTRSTTFSTNYRSLGSVRTPSQRVRPASSAASVYAGAGGSGSRISVSRSVWGGSVGSAGLAGMGGVQTEKETMQDLNDRLASYLDKVKNLETENRRLESKIREYLEKRGPQGVRDWGHYFKTIEDLRAQIFANSVDNARIVLQIDNARLAADDFRVKYETELAMRQSVESDIHGLRKVVDDTNITRLQLETEIEALKEELLFMKKNHEEEVQGLEAQIASSGLTVEVDAPKSQDLSKIMADIRAQYEQLAQKNREELDKYWSQQIEESTTVVTTKSAEIRDAETTLLELRRTLQTLEIDLDSMKNQNINLENNLGEVEARYRVQMEQLNGVLLHLESELAQTRAEGQRQTQEYEALLNIKVKLEAEIATYRRLLEDGDDFSLNDALDSSNSMQTVQRTTTRKVVDGKVVSETNDTRVLRH</sequence>
<evidence type="ECO:0000250" key="1"/>
<evidence type="ECO:0000250" key="2">
    <source>
        <dbReference type="UniProtKB" id="P05783"/>
    </source>
</evidence>
<evidence type="ECO:0000250" key="3">
    <source>
        <dbReference type="UniProtKB" id="P05784"/>
    </source>
</evidence>
<evidence type="ECO:0000255" key="4"/>
<evidence type="ECO:0000255" key="5">
    <source>
        <dbReference type="PROSITE-ProRule" id="PRU01188"/>
    </source>
</evidence>
<evidence type="ECO:0000269" key="6">
    <source>
    </source>
</evidence>
<evidence type="ECO:0000269" key="7">
    <source>
    </source>
</evidence>
<evidence type="ECO:0000269" key="8">
    <source>
    </source>
</evidence>
<evidence type="ECO:0000269" key="9">
    <source>
    </source>
</evidence>
<evidence type="ECO:0000269" key="10">
    <source>
    </source>
</evidence>
<evidence type="ECO:0000269" key="11">
    <source>
    </source>
</evidence>
<evidence type="ECO:0000269" key="12">
    <source>
    </source>
</evidence>
<evidence type="ECO:0000269" key="13">
    <source>
    </source>
</evidence>
<evidence type="ECO:0000269" key="14">
    <source>
    </source>
</evidence>
<evidence type="ECO:0000269" key="15">
    <source>
    </source>
</evidence>
<evidence type="ECO:0000269" key="16">
    <source>
    </source>
</evidence>
<evidence type="ECO:0000269" key="17">
    <source>
    </source>
</evidence>
<evidence type="ECO:0000269" key="18">
    <source>
    </source>
</evidence>
<evidence type="ECO:0000305" key="19"/>
<evidence type="ECO:0000312" key="20">
    <source>
        <dbReference type="EMBL" id="AAH91275.1"/>
    </source>
</evidence>
<evidence type="ECO:0000312" key="21">
    <source>
        <dbReference type="EMBL" id="CAA57204.1"/>
    </source>
</evidence>
<evidence type="ECO:0000312" key="22">
    <source>
        <dbReference type="RGD" id="619935"/>
    </source>
</evidence>
<evidence type="ECO:0007744" key="23">
    <source>
    </source>
</evidence>
<evidence type="ECO:0007744" key="24">
    <source>
    </source>
</evidence>
<organism>
    <name type="scientific">Rattus norvegicus</name>
    <name type="common">Rat</name>
    <dbReference type="NCBI Taxonomy" id="10116"/>
    <lineage>
        <taxon>Eukaryota</taxon>
        <taxon>Metazoa</taxon>
        <taxon>Chordata</taxon>
        <taxon>Craniata</taxon>
        <taxon>Vertebrata</taxon>
        <taxon>Euteleostomi</taxon>
        <taxon>Mammalia</taxon>
        <taxon>Eutheria</taxon>
        <taxon>Euarchontoglires</taxon>
        <taxon>Glires</taxon>
        <taxon>Rodentia</taxon>
        <taxon>Myomorpha</taxon>
        <taxon>Muroidea</taxon>
        <taxon>Muridae</taxon>
        <taxon>Murinae</taxon>
        <taxon>Rattus</taxon>
    </lineage>
</organism>
<name>K1C18_RAT</name>
<keyword id="KW-0007">Acetylation</keyword>
<keyword id="KW-0175">Coiled coil</keyword>
<keyword id="KW-0963">Cytoplasm</keyword>
<keyword id="KW-0903">Direct protein sequencing</keyword>
<keyword id="KW-0325">Glycoprotein</keyword>
<keyword id="KW-0403">Intermediate filament</keyword>
<keyword id="KW-1017">Isopeptide bond</keyword>
<keyword id="KW-0416">Keratin</keyword>
<keyword id="KW-0488">Methylation</keyword>
<keyword id="KW-0539">Nucleus</keyword>
<keyword id="KW-0597">Phosphoprotein</keyword>
<keyword id="KW-1185">Reference proteome</keyword>
<keyword id="KW-0832">Ubl conjugation</keyword>
<proteinExistence type="evidence at protein level"/>